<proteinExistence type="inferred from homology"/>
<feature type="chain" id="PRO_0000211602" description="Chromosome partition protein MukF">
    <location>
        <begin position="1"/>
        <end position="440"/>
    </location>
</feature>
<feature type="region of interest" description="Leucine-zipper">
    <location>
        <begin position="208"/>
        <end position="236"/>
    </location>
</feature>
<name>MUKF_ECO57</name>
<sequence length="440" mass="50533">MSEFSQTVPELVAWARKNDFSISLPVDRLSFLLAVATLNGERLDGEMSEGELVDAFRHVSDAFEQTSETIGVRANNAINDMVRQRLLNRFTSEQAEGNAIYRLTPLGIGITDYYIRQREFSTLRLSMQLSIVAGELKRAADAAEEGGDEFHWHRNVYAPLKYSVAEIFDSIDLTQRLMDEQQQQVKDDIAQLLNKDWRAAISSCELLLSETSGTLRELQDTLEAAGDKLQANLLRIQDATMTHDDLHFVDRLVFDLQSKLDRIISWGQQSIDLWIGYDRHVHKFIRTAIDMDKNRVFAQRLRQSVQTYFDEPWALSYANADRLLDMRDEEMALRDEEVTGELPPDLEYEEFNEIREQLAAIIEEQLAVYKTRQVPLDLGLVVREYLSQYPRARHFDVARIVIDQAVRLGVAQADFTGLPAKWQPINDYGAKVQAHVIDKY</sequence>
<dbReference type="EMBL" id="AE005174">
    <property type="protein sequence ID" value="AAG55407.1"/>
    <property type="molecule type" value="Genomic_DNA"/>
</dbReference>
<dbReference type="EMBL" id="BA000007">
    <property type="protein sequence ID" value="BAB34428.1"/>
    <property type="molecule type" value="Genomic_DNA"/>
</dbReference>
<dbReference type="PIR" id="C85618">
    <property type="entry name" value="C85618"/>
</dbReference>
<dbReference type="PIR" id="E90754">
    <property type="entry name" value="E90754"/>
</dbReference>
<dbReference type="RefSeq" id="NP_309032.1">
    <property type="nucleotide sequence ID" value="NC_002695.1"/>
</dbReference>
<dbReference type="RefSeq" id="WP_001288845.1">
    <property type="nucleotide sequence ID" value="NZ_VOAI01000006.1"/>
</dbReference>
<dbReference type="SMR" id="Q8XDG2"/>
<dbReference type="STRING" id="155864.Z1269"/>
<dbReference type="GeneID" id="917748"/>
<dbReference type="KEGG" id="ece:Z1269"/>
<dbReference type="KEGG" id="ecs:ECs_1005"/>
<dbReference type="PATRIC" id="fig|386585.9.peg.1125"/>
<dbReference type="eggNOG" id="COG3006">
    <property type="taxonomic scope" value="Bacteria"/>
</dbReference>
<dbReference type="HOGENOM" id="CLU_049853_0_0_6"/>
<dbReference type="OMA" id="TKDWQAA"/>
<dbReference type="Proteomes" id="UP000000558">
    <property type="component" value="Chromosome"/>
</dbReference>
<dbReference type="Proteomes" id="UP000002519">
    <property type="component" value="Chromosome"/>
</dbReference>
<dbReference type="GO" id="GO:0005737">
    <property type="term" value="C:cytoplasm"/>
    <property type="evidence" value="ECO:0007669"/>
    <property type="project" value="UniProtKB-UniRule"/>
</dbReference>
<dbReference type="GO" id="GO:0009295">
    <property type="term" value="C:nucleoid"/>
    <property type="evidence" value="ECO:0007669"/>
    <property type="project" value="UniProtKB-SubCell"/>
</dbReference>
<dbReference type="GO" id="GO:0005509">
    <property type="term" value="F:calcium ion binding"/>
    <property type="evidence" value="ECO:0007669"/>
    <property type="project" value="UniProtKB-UniRule"/>
</dbReference>
<dbReference type="GO" id="GO:0051301">
    <property type="term" value="P:cell division"/>
    <property type="evidence" value="ECO:0007669"/>
    <property type="project" value="UniProtKB-KW"/>
</dbReference>
<dbReference type="GO" id="GO:0030261">
    <property type="term" value="P:chromosome condensation"/>
    <property type="evidence" value="ECO:0007669"/>
    <property type="project" value="UniProtKB-KW"/>
</dbReference>
<dbReference type="GO" id="GO:0007059">
    <property type="term" value="P:chromosome segregation"/>
    <property type="evidence" value="ECO:0007669"/>
    <property type="project" value="UniProtKB-UniRule"/>
</dbReference>
<dbReference type="GO" id="GO:0006260">
    <property type="term" value="P:DNA replication"/>
    <property type="evidence" value="ECO:0007669"/>
    <property type="project" value="UniProtKB-UniRule"/>
</dbReference>
<dbReference type="CDD" id="cd16337">
    <property type="entry name" value="MukF_C"/>
    <property type="match status" value="1"/>
</dbReference>
<dbReference type="CDD" id="cd16335">
    <property type="entry name" value="MukF_N"/>
    <property type="match status" value="1"/>
</dbReference>
<dbReference type="Gene3D" id="1.20.58.590">
    <property type="entry name" value="Chromosome partition protein MukF, middle domain"/>
    <property type="match status" value="1"/>
</dbReference>
<dbReference type="Gene3D" id="1.10.225.40">
    <property type="entry name" value="MukF, C-terminal domain"/>
    <property type="match status" value="1"/>
</dbReference>
<dbReference type="Gene3D" id="1.10.10.10">
    <property type="entry name" value="Winged helix-like DNA-binding domain superfamily/Winged helix DNA-binding domain"/>
    <property type="match status" value="1"/>
</dbReference>
<dbReference type="HAMAP" id="MF_01803">
    <property type="entry name" value="MukF"/>
    <property type="match status" value="1"/>
</dbReference>
<dbReference type="InterPro" id="IPR005582">
    <property type="entry name" value="Chromosome_partition_MukF"/>
</dbReference>
<dbReference type="InterPro" id="IPR033441">
    <property type="entry name" value="MukF_C"/>
</dbReference>
<dbReference type="InterPro" id="IPR038198">
    <property type="entry name" value="MukF_C_sf"/>
</dbReference>
<dbReference type="InterPro" id="IPR033440">
    <property type="entry name" value="MukF_M"/>
</dbReference>
<dbReference type="InterPro" id="IPR036141">
    <property type="entry name" value="MukF_M_sp"/>
</dbReference>
<dbReference type="InterPro" id="IPR033439">
    <property type="entry name" value="MukF_WHTH"/>
</dbReference>
<dbReference type="InterPro" id="IPR036388">
    <property type="entry name" value="WH-like_DNA-bd_sf"/>
</dbReference>
<dbReference type="InterPro" id="IPR036390">
    <property type="entry name" value="WH_DNA-bd_sf"/>
</dbReference>
<dbReference type="NCBIfam" id="NF003615">
    <property type="entry name" value="PRK05260.1"/>
    <property type="match status" value="1"/>
</dbReference>
<dbReference type="Pfam" id="PF03882">
    <property type="entry name" value="KicB"/>
    <property type="match status" value="1"/>
</dbReference>
<dbReference type="Pfam" id="PF17193">
    <property type="entry name" value="MukF_C"/>
    <property type="match status" value="1"/>
</dbReference>
<dbReference type="Pfam" id="PF17192">
    <property type="entry name" value="MukF_M"/>
    <property type="match status" value="1"/>
</dbReference>
<dbReference type="PIRSF" id="PIRSF018282">
    <property type="entry name" value="MukF"/>
    <property type="match status" value="1"/>
</dbReference>
<dbReference type="SUPFAM" id="SSF140570">
    <property type="entry name" value="MukF C-terminal domain-like"/>
    <property type="match status" value="1"/>
</dbReference>
<dbReference type="SUPFAM" id="SSF46785">
    <property type="entry name" value="Winged helix' DNA-binding domain"/>
    <property type="match status" value="1"/>
</dbReference>
<accession>Q8XDG2</accession>
<protein>
    <recommendedName>
        <fullName evidence="1">Chromosome partition protein MukF</fullName>
    </recommendedName>
</protein>
<reference key="1">
    <citation type="journal article" date="2001" name="Nature">
        <title>Genome sequence of enterohaemorrhagic Escherichia coli O157:H7.</title>
        <authorList>
            <person name="Perna N.T."/>
            <person name="Plunkett G. III"/>
            <person name="Burland V."/>
            <person name="Mau B."/>
            <person name="Glasner J.D."/>
            <person name="Rose D.J."/>
            <person name="Mayhew G.F."/>
            <person name="Evans P.S."/>
            <person name="Gregor J."/>
            <person name="Kirkpatrick H.A."/>
            <person name="Posfai G."/>
            <person name="Hackett J."/>
            <person name="Klink S."/>
            <person name="Boutin A."/>
            <person name="Shao Y."/>
            <person name="Miller L."/>
            <person name="Grotbeck E.J."/>
            <person name="Davis N.W."/>
            <person name="Lim A."/>
            <person name="Dimalanta E.T."/>
            <person name="Potamousis K."/>
            <person name="Apodaca J."/>
            <person name="Anantharaman T.S."/>
            <person name="Lin J."/>
            <person name="Yen G."/>
            <person name="Schwartz D.C."/>
            <person name="Welch R.A."/>
            <person name="Blattner F.R."/>
        </authorList>
    </citation>
    <scope>NUCLEOTIDE SEQUENCE [LARGE SCALE GENOMIC DNA]</scope>
    <source>
        <strain>O157:H7 / EDL933 / ATCC 700927 / EHEC</strain>
    </source>
</reference>
<reference key="2">
    <citation type="journal article" date="2001" name="DNA Res.">
        <title>Complete genome sequence of enterohemorrhagic Escherichia coli O157:H7 and genomic comparison with a laboratory strain K-12.</title>
        <authorList>
            <person name="Hayashi T."/>
            <person name="Makino K."/>
            <person name="Ohnishi M."/>
            <person name="Kurokawa K."/>
            <person name="Ishii K."/>
            <person name="Yokoyama K."/>
            <person name="Han C.-G."/>
            <person name="Ohtsubo E."/>
            <person name="Nakayama K."/>
            <person name="Murata T."/>
            <person name="Tanaka M."/>
            <person name="Tobe T."/>
            <person name="Iida T."/>
            <person name="Takami H."/>
            <person name="Honda T."/>
            <person name="Sasakawa C."/>
            <person name="Ogasawara N."/>
            <person name="Yasunaga T."/>
            <person name="Kuhara S."/>
            <person name="Shiba T."/>
            <person name="Hattori M."/>
            <person name="Shinagawa H."/>
        </authorList>
    </citation>
    <scope>NUCLEOTIDE SEQUENCE [LARGE SCALE GENOMIC DNA]</scope>
    <source>
        <strain>O157:H7 / Sakai / RIMD 0509952 / EHEC</strain>
    </source>
</reference>
<gene>
    <name evidence="1" type="primary">mukF</name>
    <name type="ordered locus">Z1269</name>
    <name type="ordered locus">ECs1005</name>
</gene>
<keyword id="KW-0106">Calcium</keyword>
<keyword id="KW-0131">Cell cycle</keyword>
<keyword id="KW-0132">Cell division</keyword>
<keyword id="KW-0159">Chromosome partition</keyword>
<keyword id="KW-0963">Cytoplasm</keyword>
<keyword id="KW-0226">DNA condensation</keyword>
<keyword id="KW-1185">Reference proteome</keyword>
<comment type="function">
    <text evidence="1">Involved in chromosome condensation, segregation and cell cycle progression. May participate in facilitating chromosome segregation by condensation DNA from both sides of a centrally located replisome during cell division. Not required for mini-F plasmid partitioning. Probably acts via its interaction with MukB and MukE. Overexpression results in anucleate cells. It has a calcium binding activity.</text>
</comment>
<comment type="subunit">
    <text evidence="1">Interacts, and probably forms a ternary complex, with MukE and MukB via its C-terminal region. The complex formation is stimulated by calcium or magnesium. It is required for an interaction between MukE and MukB.</text>
</comment>
<comment type="subcellular location">
    <subcellularLocation>
        <location evidence="1">Cytoplasm</location>
        <location evidence="1">Nucleoid</location>
    </subcellularLocation>
    <text evidence="1">Restricted to the nucleoid region.</text>
</comment>
<comment type="similarity">
    <text evidence="1">Belongs to the MukF family.</text>
</comment>
<evidence type="ECO:0000255" key="1">
    <source>
        <dbReference type="HAMAP-Rule" id="MF_01803"/>
    </source>
</evidence>
<organism>
    <name type="scientific">Escherichia coli O157:H7</name>
    <dbReference type="NCBI Taxonomy" id="83334"/>
    <lineage>
        <taxon>Bacteria</taxon>
        <taxon>Pseudomonadati</taxon>
        <taxon>Pseudomonadota</taxon>
        <taxon>Gammaproteobacteria</taxon>
        <taxon>Enterobacterales</taxon>
        <taxon>Enterobacteriaceae</taxon>
        <taxon>Escherichia</taxon>
    </lineage>
</organism>